<reference key="1">
    <citation type="journal article" date="2010" name="J. Bacteriol.">
        <title>Genome sequence of the deep-rooted Yersinia pestis strain Angola reveals new insights into the evolution and pangenome of the plague bacterium.</title>
        <authorList>
            <person name="Eppinger M."/>
            <person name="Worsham P.L."/>
            <person name="Nikolich M.P."/>
            <person name="Riley D.R."/>
            <person name="Sebastian Y."/>
            <person name="Mou S."/>
            <person name="Achtman M."/>
            <person name="Lindler L.E."/>
            <person name="Ravel J."/>
        </authorList>
    </citation>
    <scope>NUCLEOTIDE SEQUENCE [LARGE SCALE GENOMIC DNA]</scope>
    <source>
        <strain>Angola</strain>
    </source>
</reference>
<sequence>MRLSLRHITWLKIAIWLAATLPLLWLVLSINLGGLSADPAKDIQHFTGRMALKLLLATLLVSPLARYSKQPLLLRCRRLLGLWCFAWGTLHLLSYSILELGLSNIGLLGHELINRPYLTLGIISWLVLLALALTSTRWAQRKMGARWQKLHNWVYVVAILAPIHYLWSVKTLSPWPIIYAVMAALLLLLRYKLLLPRYKKFRQWFR</sequence>
<protein>
    <recommendedName>
        <fullName evidence="1">Protein-methionine-sulfoxide reductase heme-binding subunit MsrQ</fullName>
    </recommendedName>
    <alternativeName>
        <fullName evidence="1">Flavocytochrome MsrQ</fullName>
    </alternativeName>
</protein>
<gene>
    <name evidence="1" type="primary">msrQ</name>
    <name type="ordered locus">YpAngola_A1202</name>
</gene>
<organism>
    <name type="scientific">Yersinia pestis bv. Antiqua (strain Angola)</name>
    <dbReference type="NCBI Taxonomy" id="349746"/>
    <lineage>
        <taxon>Bacteria</taxon>
        <taxon>Pseudomonadati</taxon>
        <taxon>Pseudomonadota</taxon>
        <taxon>Gammaproteobacteria</taxon>
        <taxon>Enterobacterales</taxon>
        <taxon>Yersiniaceae</taxon>
        <taxon>Yersinia</taxon>
    </lineage>
</organism>
<accession>A9R1Y3</accession>
<comment type="function">
    <text evidence="1">Part of the MsrPQ system that repairs oxidized periplasmic proteins containing methionine sulfoxide residues (Met-O), using respiratory chain electrons. Thus protects these proteins from oxidative-stress damage caused by reactive species of oxygen and chlorine generated by the host defense mechanisms. MsrPQ is essential for the maintenance of envelope integrity under bleach stress, rescuing a wide series of structurally unrelated periplasmic proteins from methionine oxidation. MsrQ provides electrons for reduction to the reductase catalytic subunit MsrP, using the quinone pool of the respiratory chain.</text>
</comment>
<comment type="cofactor">
    <cofactor evidence="1">
        <name>FMN</name>
        <dbReference type="ChEBI" id="CHEBI:58210"/>
    </cofactor>
    <text evidence="1">Binds 1 FMN per subunit.</text>
</comment>
<comment type="cofactor">
    <cofactor evidence="1">
        <name>heme b</name>
        <dbReference type="ChEBI" id="CHEBI:60344"/>
    </cofactor>
    <text evidence="1">Binds 1 heme b (iron(II)-protoporphyrin IX) group per subunit.</text>
</comment>
<comment type="subunit">
    <text evidence="1">Heterodimer of a catalytic subunit (MsrP) and a heme-binding subunit (MsrQ).</text>
</comment>
<comment type="subcellular location">
    <subcellularLocation>
        <location evidence="1">Cell inner membrane</location>
        <topology evidence="1">Multi-pass membrane protein</topology>
    </subcellularLocation>
</comment>
<comment type="similarity">
    <text evidence="1">Belongs to the MsrQ family.</text>
</comment>
<name>MSRQ_YERPG</name>
<dbReference type="EMBL" id="CP000901">
    <property type="protein sequence ID" value="ABX85807.1"/>
    <property type="molecule type" value="Genomic_DNA"/>
</dbReference>
<dbReference type="RefSeq" id="WP_002210072.1">
    <property type="nucleotide sequence ID" value="NZ_CP009935.1"/>
</dbReference>
<dbReference type="SMR" id="A9R1Y3"/>
<dbReference type="GeneID" id="57975086"/>
<dbReference type="KEGG" id="ypg:YpAngola_A1202"/>
<dbReference type="PATRIC" id="fig|349746.12.peg.2156"/>
<dbReference type="GO" id="GO:0005886">
    <property type="term" value="C:plasma membrane"/>
    <property type="evidence" value="ECO:0007669"/>
    <property type="project" value="UniProtKB-SubCell"/>
</dbReference>
<dbReference type="GO" id="GO:0009055">
    <property type="term" value="F:electron transfer activity"/>
    <property type="evidence" value="ECO:0007669"/>
    <property type="project" value="UniProtKB-UniRule"/>
</dbReference>
<dbReference type="GO" id="GO:0010181">
    <property type="term" value="F:FMN binding"/>
    <property type="evidence" value="ECO:0007669"/>
    <property type="project" value="UniProtKB-UniRule"/>
</dbReference>
<dbReference type="GO" id="GO:0020037">
    <property type="term" value="F:heme binding"/>
    <property type="evidence" value="ECO:0007669"/>
    <property type="project" value="UniProtKB-UniRule"/>
</dbReference>
<dbReference type="GO" id="GO:0046872">
    <property type="term" value="F:metal ion binding"/>
    <property type="evidence" value="ECO:0007669"/>
    <property type="project" value="UniProtKB-KW"/>
</dbReference>
<dbReference type="GO" id="GO:0016679">
    <property type="term" value="F:oxidoreductase activity, acting on diphenols and related substances as donors"/>
    <property type="evidence" value="ECO:0007669"/>
    <property type="project" value="TreeGrafter"/>
</dbReference>
<dbReference type="GO" id="GO:0030091">
    <property type="term" value="P:protein repair"/>
    <property type="evidence" value="ECO:0007669"/>
    <property type="project" value="UniProtKB-UniRule"/>
</dbReference>
<dbReference type="HAMAP" id="MF_01207">
    <property type="entry name" value="MsrQ"/>
    <property type="match status" value="1"/>
</dbReference>
<dbReference type="InterPro" id="IPR013130">
    <property type="entry name" value="Fe3_Rdtase_TM_dom"/>
</dbReference>
<dbReference type="InterPro" id="IPR022837">
    <property type="entry name" value="MsrQ-like"/>
</dbReference>
<dbReference type="NCBIfam" id="NF003832">
    <property type="entry name" value="PRK05419.1-4"/>
    <property type="match status" value="1"/>
</dbReference>
<dbReference type="PANTHER" id="PTHR36964">
    <property type="entry name" value="PROTEIN-METHIONINE-SULFOXIDE REDUCTASE HEME-BINDING SUBUNIT MSRQ"/>
    <property type="match status" value="1"/>
</dbReference>
<dbReference type="PANTHER" id="PTHR36964:SF1">
    <property type="entry name" value="PROTEIN-METHIONINE-SULFOXIDE REDUCTASE HEME-BINDING SUBUNIT MSRQ"/>
    <property type="match status" value="1"/>
</dbReference>
<dbReference type="Pfam" id="PF01794">
    <property type="entry name" value="Ferric_reduct"/>
    <property type="match status" value="1"/>
</dbReference>
<evidence type="ECO:0000255" key="1">
    <source>
        <dbReference type="HAMAP-Rule" id="MF_01207"/>
    </source>
</evidence>
<keyword id="KW-0997">Cell inner membrane</keyword>
<keyword id="KW-1003">Cell membrane</keyword>
<keyword id="KW-0249">Electron transport</keyword>
<keyword id="KW-0285">Flavoprotein</keyword>
<keyword id="KW-0288">FMN</keyword>
<keyword id="KW-0349">Heme</keyword>
<keyword id="KW-0408">Iron</keyword>
<keyword id="KW-0472">Membrane</keyword>
<keyword id="KW-0479">Metal-binding</keyword>
<keyword id="KW-0812">Transmembrane</keyword>
<keyword id="KW-1133">Transmembrane helix</keyword>
<keyword id="KW-0813">Transport</keyword>
<feature type="chain" id="PRO_1000138751" description="Protein-methionine-sulfoxide reductase heme-binding subunit MsrQ">
    <location>
        <begin position="1"/>
        <end position="206"/>
    </location>
</feature>
<feature type="transmembrane region" description="Helical" evidence="1">
    <location>
        <begin position="13"/>
        <end position="33"/>
    </location>
</feature>
<feature type="transmembrane region" description="Helical" evidence="1">
    <location>
        <begin position="79"/>
        <end position="99"/>
    </location>
</feature>
<feature type="transmembrane region" description="Helical" evidence="1">
    <location>
        <begin position="116"/>
        <end position="136"/>
    </location>
</feature>
<feature type="transmembrane region" description="Helical" evidence="1">
    <location>
        <begin position="147"/>
        <end position="167"/>
    </location>
</feature>
<feature type="transmembrane region" description="Helical" evidence="1">
    <location>
        <begin position="169"/>
        <end position="189"/>
    </location>
</feature>
<proteinExistence type="inferred from homology"/>